<feature type="chain" id="PRO_0000453781" description="Thioesterase poxG">
    <location>
        <begin position="1"/>
        <end position="303"/>
    </location>
</feature>
<reference key="1">
    <citation type="journal article" date="2017" name="J. Am. Chem. Soc.">
        <title>Collaborative Biosynthesis of Maleimide- and Succinimide-Containing Natural Products by Fungal Polyketide Megasynthases.</title>
        <authorList>
            <person name="Sato M."/>
            <person name="Dander J.E."/>
            <person name="Sato C."/>
            <person name="Hung Y.S."/>
            <person name="Gao S.S."/>
            <person name="Tang M.C."/>
            <person name="Hang L."/>
            <person name="Winter J.M."/>
            <person name="Garg N.K."/>
            <person name="Watanabe K."/>
            <person name="Tang Y."/>
        </authorList>
    </citation>
    <scope>NUCLEOTIDE SEQUENCE [GENOMIC DNA]</scope>
    <scope>FUNCTION</scope>
    <scope>INDUCTION</scope>
    <scope>PATHWAY</scope>
    <source>
        <strain>K85</strain>
    </source>
</reference>
<reference key="2">
    <citation type="journal article" date="2020" name="Chem. Commun. (Camb.)">
        <title>Evidence for enzyme catalysed intramolecular [4+2] Diels-Alder cyclization during the biosynthesis of pyrichalasin H.</title>
        <authorList>
            <person name="Hantke V."/>
            <person name="Skellam E.J."/>
            <person name="Cox R.J."/>
        </authorList>
    </citation>
    <scope>FUNCTION</scope>
</reference>
<dbReference type="EC" id="2.3.1.-" evidence="4"/>
<dbReference type="EMBL" id="KY764296">
    <property type="protein sequence ID" value="ARF05981.1"/>
    <property type="molecule type" value="Genomic_DNA"/>
</dbReference>
<dbReference type="SMR" id="A0A1W5T312"/>
<dbReference type="GO" id="GO:0016740">
    <property type="term" value="F:transferase activity"/>
    <property type="evidence" value="ECO:0007669"/>
    <property type="project" value="UniProtKB-KW"/>
</dbReference>
<dbReference type="InterPro" id="IPR029069">
    <property type="entry name" value="HotDog_dom_sf"/>
</dbReference>
<dbReference type="InterPro" id="IPR051490">
    <property type="entry name" value="THEM6_lcsJ_thioesterase"/>
</dbReference>
<dbReference type="PANTHER" id="PTHR12475">
    <property type="match status" value="1"/>
</dbReference>
<dbReference type="PANTHER" id="PTHR12475:SF4">
    <property type="entry name" value="PROTEIN THEM6"/>
    <property type="match status" value="1"/>
</dbReference>
<dbReference type="Pfam" id="PF13279">
    <property type="entry name" value="4HBT_2"/>
    <property type="match status" value="1"/>
</dbReference>
<dbReference type="SUPFAM" id="SSF54637">
    <property type="entry name" value="Thioesterase/thiol ester dehydrase-isomerase"/>
    <property type="match status" value="1"/>
</dbReference>
<evidence type="ECO:0000269" key="1">
    <source>
    </source>
</evidence>
<evidence type="ECO:0000303" key="2">
    <source>
    </source>
</evidence>
<evidence type="ECO:0000305" key="3"/>
<evidence type="ECO:0000305" key="4">
    <source>
    </source>
</evidence>
<evidence type="ECO:0000305" key="5">
    <source>
    </source>
</evidence>
<organism>
    <name type="scientific">Penicillium oxalicum</name>
    <dbReference type="NCBI Taxonomy" id="69781"/>
    <lineage>
        <taxon>Eukaryota</taxon>
        <taxon>Fungi</taxon>
        <taxon>Dikarya</taxon>
        <taxon>Ascomycota</taxon>
        <taxon>Pezizomycotina</taxon>
        <taxon>Eurotiomycetes</taxon>
        <taxon>Eurotiomycetidae</taxon>
        <taxon>Eurotiales</taxon>
        <taxon>Aspergillaceae</taxon>
        <taxon>Penicillium</taxon>
    </lineage>
</organism>
<sequence>MVSLSCLISYGECLLETVQTHPWSTIGVVVFLSSVKNAPLMWHARLIIAVFYHSVTRKNDVVTIERYGRQGLFGYIVTSSRSPLYECDINGHKSDSTYFSDLDINRIHLITRLFKGAGDLSLRPDRPNVAPEDRPKKMRVLLGGTCCSFRREIKPYAAYEIHSRVLAWDEKWLYVVSYFVKPGSARKMASLQTEVGDKCEMTDLARSMVFTSAITKFVFKDGRKTVRPADALEEMGLLSASEEVVEISEAGEDLWTRSRVEERRKTGIKIAQHFIALDELHDQFEHVSEHPFLGKFGVLGTMF</sequence>
<comment type="function">
    <text evidence="1 5">Thioesterase; part of the gene cluster that mediates the biosynthesis of oxaleimides, cytotoxic compounds containing an unusual disubstituted succinimide moiety (PubMed:28365998). The first step of the pathway is provided by the HR-PKS poxF that serves in a new mode of collaborative biosynthesis with the PKS-NRPS poxE, by providing the olefin containing amino acid substrate via the synthesis of an ACP-bound dec-4-enoate (PubMed:28365998). The cytochrome P450 monooxygenase poxM-catalyzed oxidation at the alpha-position creates the enzyme-bound 2-hydroxydec-4-enoyl-ACP thioester, which may be prone to spontaneous hydrolysis to yield 2-hydroxydec-4-enoic acid due to increased electrophilicity of the carbonyl (PubMed:28365998). 2-hydroxydec-4-enoic acid can then be further oxidized by poxM to yield the alpha-ketoacid 2-oxodec-4-enoicacid, which is reductively aminated by the aminotransferase poxL to yield (S,E)-2-aminodec-4-enoic acid (PubMed:28365998). The Hybrid PKS-NRPS synthetase poxE then performs condensation between the octaketide product of its PKS modules and the amino group of (S,E)-2-aminodec-4-enoic acid which is activated and incorporated by the adenylation domain (PubMed:28365998). The resulting aminoacyl product can be cyclized by the Diels-Alderase PoxQ and reductively released by the reductive (R) domain of poxE to yield an aldehyde intermediate (Probable) (PubMed:28365998). The released aldehyde is then substrate for a Knoevenagel condensation by the hydrolyase poxO followed by an oxidation at the 5-position of the pyrrolidone ring (PubMed:28365998). The presence of the olefin from the amino acid building block allows for migration of the substituted allyl group to occur (PubMed:28365998). This allylic transposition reaction takes place in a conjugate addition, semipinacol-like fashion to yield a succinimide intermediate (PubMed:28365998). Iterative two-electron oxidations of the C7 methyl of the succinimide intermediate to the carboxylic acid can be catalyzed by one of two remaining cytochrome P450 monooxygenasess poxC or poxD to yield oxaleimide A (PubMed:28365998). Subsequent oxidation yields the maleimide scaffold oxaleimide I (PubMed:28365998). Both oxaleimide A and oxaleimide I can undergo oxidative modifications in the decalin ring to yield the series of products oxaleimides B to H (PubMed:28365998).</text>
</comment>
<comment type="pathway">
    <text evidence="4">Secondary metabolite biosynthesis.</text>
</comment>
<comment type="induction">
    <text evidence="1">Expression is positively regulated by the oxaleimides biosynthesis cluster-specific transcription factor poxB.</text>
</comment>
<comment type="similarity">
    <text evidence="3">Belongs to the lcsJ thioesterase family.</text>
</comment>
<name>POXG_PENOX</name>
<protein>
    <recommendedName>
        <fullName evidence="2">Thioesterase poxG</fullName>
        <ecNumber evidence="4">2.3.1.-</ecNumber>
    </recommendedName>
    <alternativeName>
        <fullName evidence="2">Oxaleimides biosynthesis cluster protein G</fullName>
    </alternativeName>
</protein>
<accession>A0A1W5T312</accession>
<proteinExistence type="evidence at transcript level"/>
<keyword id="KW-0808">Transferase</keyword>
<gene>
    <name evidence="2" type="primary">poxG</name>
</gene>